<sequence length="142" mass="15792">MRRQSQRGFTLLEIMVVIVIMGILASLVVPNLMGNKDKADRQKVVSDIVALESALDMYKLDNSRYPTTEQGLQALITKPSVPPEARYYPQDGYIRRLPQDPWGGDYQLVSPGQHGQIDIFSSGQDGVPGTDDDIGNWTLSKK</sequence>
<keyword id="KW-0997">Cell inner membrane</keyword>
<keyword id="KW-1003">Cell membrane</keyword>
<keyword id="KW-0472">Membrane</keyword>
<keyword id="KW-0488">Methylation</keyword>
<keyword id="KW-0812">Transmembrane</keyword>
<keyword id="KW-1133">Transmembrane helix</keyword>
<feature type="propeptide" id="PRO_0000449511" description="Leader sequence" evidence="3">
    <location>
        <begin position="1"/>
        <end position="8"/>
    </location>
</feature>
<feature type="chain" id="PRO_0000449512" description="Type II secretion system core protein G">
    <location>
        <begin position="9"/>
        <end position="142"/>
    </location>
</feature>
<feature type="transmembrane region" description="Helical" evidence="2">
    <location>
        <begin position="9"/>
        <end position="29"/>
    </location>
</feature>
<feature type="region of interest" description="Disordered" evidence="4">
    <location>
        <begin position="122"/>
        <end position="142"/>
    </location>
</feature>
<feature type="modified residue" description="N-methylphenylalanine" evidence="3">
    <location>
        <position position="9"/>
    </location>
</feature>
<comment type="function">
    <text evidence="5 6">Core component of the type II secretion system required for the energy-dependent secretion of extracellular factors such as proteases and toxins from the periplasm (PubMed:8809775). Pseudopilin (pilin-like) protein that polymerizes to form the pseudopilus. Further polymerization triggers pseudopilus growth (PubMed:15491357).</text>
</comment>
<comment type="subunit">
    <text evidence="5 6">Type II secretion system is composed of four main components: the outer membrane complex, the inner membrane complex, the cytoplasmic secretion ATPase and the periplasm-spanning pseudopilus. Forms homomultimers.</text>
</comment>
<comment type="subcellular location">
    <subcellularLocation>
        <location evidence="1">Cell inner membrane</location>
        <topology evidence="2">Single-pass membrane protein</topology>
    </subcellularLocation>
</comment>
<comment type="PTM">
    <text evidence="1">Cleaved by the prepilin peptidase.</text>
</comment>
<comment type="PTM">
    <text evidence="1">Methylated by prepilin peptidase at the amino group of the N-terminal phenylalanine once the leader sequence is cleaved.</text>
</comment>
<comment type="similarity">
    <text evidence="7">Belongs to the GSP G family.</text>
</comment>
<name>GSPG_KLEM8</name>
<gene>
    <name type="ordered locus">KOX_13580</name>
</gene>
<reference key="1">
    <citation type="journal article" date="2012" name="J. Bacteriol.">
        <title>Complete genome sequence of Klebsiella oxytoca KCTC 1686, used in production of 2,3-butanediol.</title>
        <authorList>
            <person name="Shin S.H."/>
            <person name="Kim S."/>
            <person name="Kim J.Y."/>
            <person name="Lee S."/>
            <person name="Um Y."/>
            <person name="Oh M.K."/>
            <person name="Kim Y.R."/>
            <person name="Lee J."/>
            <person name="Yang K.S."/>
        </authorList>
    </citation>
    <scope>NUCLEOTIDE SEQUENCE [LARGE SCALE GENOMIC DNA]</scope>
    <source>
        <strain>ATCC 8724 / DSM 4798 / JCM 20051 / NBRC 3318 / NRRL B-199 / KCTC 1686 / BUCSAV 143 / CCM 1901</strain>
    </source>
</reference>
<reference key="2">
    <citation type="journal article" date="1996" name="Mol. Microbiol.">
        <title>Multimers of the precursor of a type IV pilin-like component of the general secretory pathway are unrelated to pili.</title>
        <authorList>
            <person name="Pugsley A.P."/>
        </authorList>
    </citation>
    <scope>SUBUNIT</scope>
    <scope>FUNCTION</scope>
</reference>
<reference key="3">
    <citation type="journal article" date="2004" name="Mol. Microbiol.">
        <title>Structure and assembly of the pseudopilin PulG.</title>
        <authorList>
            <person name="Koehler R."/>
            <person name="Schaefer K."/>
            <person name="Mueller S."/>
            <person name="Vignon G."/>
            <person name="Diederichs K."/>
            <person name="Philippsen A."/>
            <person name="Ringler P."/>
            <person name="Pugsley A.P."/>
            <person name="Engel A."/>
            <person name="Welte W."/>
        </authorList>
    </citation>
    <scope>FUNCTION</scope>
    <scope>SUBUNIT</scope>
</reference>
<dbReference type="EMBL" id="CP003218">
    <property type="protein sequence ID" value="AEX04440.1"/>
    <property type="molecule type" value="Genomic_DNA"/>
</dbReference>
<dbReference type="SMR" id="A0A0H3HDD6"/>
<dbReference type="KEGG" id="kox:KOX_13580"/>
<dbReference type="HOGENOM" id="CLU_091705_2_1_6"/>
<dbReference type="Proteomes" id="UP000007843">
    <property type="component" value="Chromosome"/>
</dbReference>
<dbReference type="GO" id="GO:0005886">
    <property type="term" value="C:plasma membrane"/>
    <property type="evidence" value="ECO:0007669"/>
    <property type="project" value="UniProtKB-SubCell"/>
</dbReference>
<dbReference type="GO" id="GO:0015627">
    <property type="term" value="C:type II protein secretion system complex"/>
    <property type="evidence" value="ECO:0007669"/>
    <property type="project" value="InterPro"/>
</dbReference>
<dbReference type="GO" id="GO:0015628">
    <property type="term" value="P:protein secretion by the type II secretion system"/>
    <property type="evidence" value="ECO:0007669"/>
    <property type="project" value="InterPro"/>
</dbReference>
<dbReference type="Gene3D" id="3.30.700.10">
    <property type="entry name" value="Glycoprotein, Type 4 Pilin"/>
    <property type="match status" value="1"/>
</dbReference>
<dbReference type="InterPro" id="IPR000983">
    <property type="entry name" value="Bac_GSPG_pilin"/>
</dbReference>
<dbReference type="InterPro" id="IPR012902">
    <property type="entry name" value="N_methyl_site"/>
</dbReference>
<dbReference type="InterPro" id="IPR045584">
    <property type="entry name" value="Pilin-like"/>
</dbReference>
<dbReference type="InterPro" id="IPR013545">
    <property type="entry name" value="T2SS_protein-GspG_C"/>
</dbReference>
<dbReference type="InterPro" id="IPR050470">
    <property type="entry name" value="T4P/T2SS_Core"/>
</dbReference>
<dbReference type="InterPro" id="IPR010054">
    <property type="entry name" value="Type2_sec_GspG"/>
</dbReference>
<dbReference type="NCBIfam" id="TIGR02532">
    <property type="entry name" value="IV_pilin_GFxxxE"/>
    <property type="match status" value="1"/>
</dbReference>
<dbReference type="NCBIfam" id="TIGR01710">
    <property type="entry name" value="typeII_sec_gspG"/>
    <property type="match status" value="1"/>
</dbReference>
<dbReference type="PANTHER" id="PTHR30093">
    <property type="entry name" value="GENERAL SECRETION PATHWAY PROTEIN G"/>
    <property type="match status" value="1"/>
</dbReference>
<dbReference type="PANTHER" id="PTHR30093:SF44">
    <property type="entry name" value="TYPE II SECRETION SYSTEM CORE PROTEIN G"/>
    <property type="match status" value="1"/>
</dbReference>
<dbReference type="Pfam" id="PF07963">
    <property type="entry name" value="N_methyl"/>
    <property type="match status" value="1"/>
</dbReference>
<dbReference type="Pfam" id="PF08334">
    <property type="entry name" value="T2SSG"/>
    <property type="match status" value="1"/>
</dbReference>
<dbReference type="PRINTS" id="PR00813">
    <property type="entry name" value="BCTERIALGSPG"/>
</dbReference>
<dbReference type="SUPFAM" id="SSF54523">
    <property type="entry name" value="Pili subunits"/>
    <property type="match status" value="1"/>
</dbReference>
<dbReference type="PROSITE" id="PS00409">
    <property type="entry name" value="PROKAR_NTER_METHYL"/>
    <property type="match status" value="1"/>
</dbReference>
<organism>
    <name type="scientific">Klebsiella michiganensis (strain ATCC 8724 / DSM 4798 / JCM 20051 / NBRC 3318 / NRRL B-199 / KCTC 1686 / BUCSAV 143 / CCM 1901)</name>
    <dbReference type="NCBI Taxonomy" id="1006551"/>
    <lineage>
        <taxon>Bacteria</taxon>
        <taxon>Pseudomonadati</taxon>
        <taxon>Pseudomonadota</taxon>
        <taxon>Gammaproteobacteria</taxon>
        <taxon>Enterobacterales</taxon>
        <taxon>Enterobacteriaceae</taxon>
        <taxon>Klebsiella/Raoultella group</taxon>
        <taxon>Klebsiella</taxon>
    </lineage>
</organism>
<accession>A0A0H3HDD6</accession>
<protein>
    <recommendedName>
        <fullName>Type II secretion system core protein G</fullName>
        <shortName>T2SS core protein G</shortName>
    </recommendedName>
    <alternativeName>
        <fullName>General secretion pathway protein G</fullName>
    </alternativeName>
</protein>
<proteinExistence type="evidence at protein level"/>
<evidence type="ECO:0000250" key="1">
    <source>
        <dbReference type="UniProtKB" id="Q00514"/>
    </source>
</evidence>
<evidence type="ECO:0000255" key="2"/>
<evidence type="ECO:0000255" key="3">
    <source>
        <dbReference type="PROSITE-ProRule" id="PRU01070"/>
    </source>
</evidence>
<evidence type="ECO:0000256" key="4">
    <source>
        <dbReference type="SAM" id="MobiDB-lite"/>
    </source>
</evidence>
<evidence type="ECO:0000269" key="5">
    <source>
    </source>
</evidence>
<evidence type="ECO:0000269" key="6">
    <source>
    </source>
</evidence>
<evidence type="ECO:0000305" key="7"/>